<protein>
    <recommendedName>
        <fullName evidence="1">2-C-methyl-D-erythritol 2,4-cyclodiphosphate synthase</fullName>
        <shortName evidence="1">MECDP-synthase</shortName>
        <shortName evidence="1">MECPP-synthase</shortName>
        <shortName evidence="1">MECPS</shortName>
        <ecNumber evidence="1">4.6.1.12</ecNumber>
    </recommendedName>
</protein>
<dbReference type="EC" id="4.6.1.12" evidence="1"/>
<dbReference type="EMBL" id="CP000100">
    <property type="protein sequence ID" value="ABB57200.1"/>
    <property type="molecule type" value="Genomic_DNA"/>
</dbReference>
<dbReference type="RefSeq" id="WP_011242692.1">
    <property type="nucleotide sequence ID" value="NZ_JACJTX010000003.1"/>
</dbReference>
<dbReference type="SMR" id="Q31P19"/>
<dbReference type="STRING" id="1140.Synpcc7942_1170"/>
<dbReference type="PaxDb" id="1140-Synpcc7942_1170"/>
<dbReference type="GeneID" id="72430028"/>
<dbReference type="KEGG" id="syf:Synpcc7942_1170"/>
<dbReference type="eggNOG" id="COG0245">
    <property type="taxonomic scope" value="Bacteria"/>
</dbReference>
<dbReference type="HOGENOM" id="CLU_084630_2_0_3"/>
<dbReference type="OrthoDB" id="9804336at2"/>
<dbReference type="BioCyc" id="SYNEL:SYNPCC7942_1170-MONOMER"/>
<dbReference type="UniPathway" id="UPA00056">
    <property type="reaction ID" value="UER00095"/>
</dbReference>
<dbReference type="Proteomes" id="UP000889800">
    <property type="component" value="Chromosome"/>
</dbReference>
<dbReference type="GO" id="GO:0008685">
    <property type="term" value="F:2-C-methyl-D-erythritol 2,4-cyclodiphosphate synthase activity"/>
    <property type="evidence" value="ECO:0007669"/>
    <property type="project" value="UniProtKB-UniRule"/>
</dbReference>
<dbReference type="GO" id="GO:0046872">
    <property type="term" value="F:metal ion binding"/>
    <property type="evidence" value="ECO:0007669"/>
    <property type="project" value="UniProtKB-KW"/>
</dbReference>
<dbReference type="GO" id="GO:0019288">
    <property type="term" value="P:isopentenyl diphosphate biosynthetic process, methylerythritol 4-phosphate pathway"/>
    <property type="evidence" value="ECO:0007669"/>
    <property type="project" value="UniProtKB-UniRule"/>
</dbReference>
<dbReference type="GO" id="GO:0016114">
    <property type="term" value="P:terpenoid biosynthetic process"/>
    <property type="evidence" value="ECO:0007669"/>
    <property type="project" value="InterPro"/>
</dbReference>
<dbReference type="CDD" id="cd00554">
    <property type="entry name" value="MECDP_synthase"/>
    <property type="match status" value="1"/>
</dbReference>
<dbReference type="FunFam" id="3.30.1330.50:FF:000001">
    <property type="entry name" value="2-C-methyl-D-erythritol 2,4-cyclodiphosphate synthase"/>
    <property type="match status" value="1"/>
</dbReference>
<dbReference type="Gene3D" id="3.30.1330.50">
    <property type="entry name" value="2-C-methyl-D-erythritol 2,4-cyclodiphosphate synthase"/>
    <property type="match status" value="1"/>
</dbReference>
<dbReference type="HAMAP" id="MF_00107">
    <property type="entry name" value="IspF"/>
    <property type="match status" value="1"/>
</dbReference>
<dbReference type="InterPro" id="IPR003526">
    <property type="entry name" value="MECDP_synthase"/>
</dbReference>
<dbReference type="InterPro" id="IPR020555">
    <property type="entry name" value="MECDP_synthase_CS"/>
</dbReference>
<dbReference type="InterPro" id="IPR036571">
    <property type="entry name" value="MECDP_synthase_sf"/>
</dbReference>
<dbReference type="NCBIfam" id="TIGR00151">
    <property type="entry name" value="ispF"/>
    <property type="match status" value="1"/>
</dbReference>
<dbReference type="PANTHER" id="PTHR43181">
    <property type="entry name" value="2-C-METHYL-D-ERYTHRITOL 2,4-CYCLODIPHOSPHATE SYNTHASE, CHLOROPLASTIC"/>
    <property type="match status" value="1"/>
</dbReference>
<dbReference type="PANTHER" id="PTHR43181:SF1">
    <property type="entry name" value="2-C-METHYL-D-ERYTHRITOL 2,4-CYCLODIPHOSPHATE SYNTHASE, CHLOROPLASTIC"/>
    <property type="match status" value="1"/>
</dbReference>
<dbReference type="Pfam" id="PF02542">
    <property type="entry name" value="YgbB"/>
    <property type="match status" value="1"/>
</dbReference>
<dbReference type="SUPFAM" id="SSF69765">
    <property type="entry name" value="IpsF-like"/>
    <property type="match status" value="1"/>
</dbReference>
<dbReference type="PROSITE" id="PS01350">
    <property type="entry name" value="ISPF"/>
    <property type="match status" value="1"/>
</dbReference>
<name>ISPF_SYNE7</name>
<sequence>MSRFRIGNGYDIHRLVEGRPLILGGIQLEHSLGLDGHSDADVLTHAIMDALLGALSLGDIGHYFPPTDPQWKGADSLKLLAQVNQLIRDRGWTIGNLDSVVVAEQPKLKPHIAAMRDRLAKVLELEPDQIGIKATTNEKLGPTGREEGICAYAVALLVRD</sequence>
<keyword id="KW-0414">Isoprene biosynthesis</keyword>
<keyword id="KW-0456">Lyase</keyword>
<keyword id="KW-0479">Metal-binding</keyword>
<keyword id="KW-1185">Reference proteome</keyword>
<accession>Q31P19</accession>
<gene>
    <name evidence="1" type="primary">ispF</name>
    <name type="ordered locus">Synpcc7942_1170</name>
</gene>
<organism>
    <name type="scientific">Synechococcus elongatus (strain ATCC 33912 / PCC 7942 / FACHB-805)</name>
    <name type="common">Anacystis nidulans R2</name>
    <dbReference type="NCBI Taxonomy" id="1140"/>
    <lineage>
        <taxon>Bacteria</taxon>
        <taxon>Bacillati</taxon>
        <taxon>Cyanobacteriota</taxon>
        <taxon>Cyanophyceae</taxon>
        <taxon>Synechococcales</taxon>
        <taxon>Synechococcaceae</taxon>
        <taxon>Synechococcus</taxon>
    </lineage>
</organism>
<proteinExistence type="inferred from homology"/>
<feature type="chain" id="PRO_0000237759" description="2-C-methyl-D-erythritol 2,4-cyclodiphosphate synthase">
    <location>
        <begin position="1"/>
        <end position="160"/>
    </location>
</feature>
<feature type="binding site" evidence="1">
    <location>
        <begin position="11"/>
        <end position="13"/>
    </location>
    <ligand>
        <name>4-CDP-2-C-methyl-D-erythritol 2-phosphate</name>
        <dbReference type="ChEBI" id="CHEBI:57919"/>
    </ligand>
</feature>
<feature type="binding site" evidence="1">
    <location>
        <position position="11"/>
    </location>
    <ligand>
        <name>a divalent metal cation</name>
        <dbReference type="ChEBI" id="CHEBI:60240"/>
    </ligand>
</feature>
<feature type="binding site" evidence="1">
    <location>
        <position position="13"/>
    </location>
    <ligand>
        <name>a divalent metal cation</name>
        <dbReference type="ChEBI" id="CHEBI:60240"/>
    </ligand>
</feature>
<feature type="binding site" evidence="1">
    <location>
        <begin position="37"/>
        <end position="38"/>
    </location>
    <ligand>
        <name>4-CDP-2-C-methyl-D-erythritol 2-phosphate</name>
        <dbReference type="ChEBI" id="CHEBI:57919"/>
    </ligand>
</feature>
<feature type="binding site" evidence="1">
    <location>
        <position position="45"/>
    </location>
    <ligand>
        <name>a divalent metal cation</name>
        <dbReference type="ChEBI" id="CHEBI:60240"/>
    </ligand>
</feature>
<feature type="binding site" evidence="1">
    <location>
        <begin position="59"/>
        <end position="61"/>
    </location>
    <ligand>
        <name>4-CDP-2-C-methyl-D-erythritol 2-phosphate</name>
        <dbReference type="ChEBI" id="CHEBI:57919"/>
    </ligand>
</feature>
<feature type="binding site" evidence="1">
    <location>
        <begin position="135"/>
        <end position="138"/>
    </location>
    <ligand>
        <name>4-CDP-2-C-methyl-D-erythritol 2-phosphate</name>
        <dbReference type="ChEBI" id="CHEBI:57919"/>
    </ligand>
</feature>
<feature type="binding site" evidence="1">
    <location>
        <position position="145"/>
    </location>
    <ligand>
        <name>4-CDP-2-C-methyl-D-erythritol 2-phosphate</name>
        <dbReference type="ChEBI" id="CHEBI:57919"/>
    </ligand>
</feature>
<feature type="site" description="Transition state stabilizer" evidence="1">
    <location>
        <position position="37"/>
    </location>
</feature>
<feature type="site" description="Transition state stabilizer" evidence="1">
    <location>
        <position position="136"/>
    </location>
</feature>
<evidence type="ECO:0000255" key="1">
    <source>
        <dbReference type="HAMAP-Rule" id="MF_00107"/>
    </source>
</evidence>
<reference key="1">
    <citation type="submission" date="2005-08" db="EMBL/GenBank/DDBJ databases">
        <title>Complete sequence of chromosome 1 of Synechococcus elongatus PCC 7942.</title>
        <authorList>
            <consortium name="US DOE Joint Genome Institute"/>
            <person name="Copeland A."/>
            <person name="Lucas S."/>
            <person name="Lapidus A."/>
            <person name="Barry K."/>
            <person name="Detter J.C."/>
            <person name="Glavina T."/>
            <person name="Hammon N."/>
            <person name="Israni S."/>
            <person name="Pitluck S."/>
            <person name="Schmutz J."/>
            <person name="Larimer F."/>
            <person name="Land M."/>
            <person name="Kyrpides N."/>
            <person name="Lykidis A."/>
            <person name="Golden S."/>
            <person name="Richardson P."/>
        </authorList>
    </citation>
    <scope>NUCLEOTIDE SEQUENCE [LARGE SCALE GENOMIC DNA]</scope>
    <source>
        <strain>ATCC 33912 / PCC 7942 / FACHB-805</strain>
    </source>
</reference>
<comment type="function">
    <text evidence="1">Involved in the biosynthesis of isopentenyl diphosphate (IPP) and dimethylallyl diphosphate (DMAPP), two major building blocks of isoprenoid compounds. Catalyzes the conversion of 4-diphosphocytidyl-2-C-methyl-D-erythritol 2-phosphate (CDP-ME2P) to 2-C-methyl-D-erythritol 2,4-cyclodiphosphate (ME-CPP) with a corresponding release of cytidine 5-monophosphate (CMP).</text>
</comment>
<comment type="catalytic activity">
    <reaction evidence="1">
        <text>4-CDP-2-C-methyl-D-erythritol 2-phosphate = 2-C-methyl-D-erythritol 2,4-cyclic diphosphate + CMP</text>
        <dbReference type="Rhea" id="RHEA:23864"/>
        <dbReference type="ChEBI" id="CHEBI:57919"/>
        <dbReference type="ChEBI" id="CHEBI:58483"/>
        <dbReference type="ChEBI" id="CHEBI:60377"/>
        <dbReference type="EC" id="4.6.1.12"/>
    </reaction>
</comment>
<comment type="cofactor">
    <cofactor evidence="1">
        <name>a divalent metal cation</name>
        <dbReference type="ChEBI" id="CHEBI:60240"/>
    </cofactor>
    <text evidence="1">Binds 1 divalent metal cation per subunit.</text>
</comment>
<comment type="pathway">
    <text evidence="1">Isoprenoid biosynthesis; isopentenyl diphosphate biosynthesis via DXP pathway; isopentenyl diphosphate from 1-deoxy-D-xylulose 5-phosphate: step 4/6.</text>
</comment>
<comment type="subunit">
    <text evidence="1">Homotrimer.</text>
</comment>
<comment type="similarity">
    <text evidence="1">Belongs to the IspF family.</text>
</comment>